<accession>A5VQN6</accession>
<name>HFQ_BRUO2</name>
<dbReference type="EMBL" id="CP000708">
    <property type="protein sequence ID" value="ABQ61614.1"/>
    <property type="molecule type" value="Genomic_DNA"/>
</dbReference>
<dbReference type="RefSeq" id="WP_002964239.1">
    <property type="nucleotide sequence ID" value="NC_009505.1"/>
</dbReference>
<dbReference type="SMR" id="A5VQN6"/>
<dbReference type="GeneID" id="97533634"/>
<dbReference type="KEGG" id="bov:BOV_1070"/>
<dbReference type="HOGENOM" id="CLU_113688_0_0_5"/>
<dbReference type="PRO" id="PR:A5VQN6"/>
<dbReference type="Proteomes" id="UP000006383">
    <property type="component" value="Chromosome I"/>
</dbReference>
<dbReference type="GO" id="GO:0005829">
    <property type="term" value="C:cytosol"/>
    <property type="evidence" value="ECO:0007669"/>
    <property type="project" value="TreeGrafter"/>
</dbReference>
<dbReference type="GO" id="GO:0003723">
    <property type="term" value="F:RNA binding"/>
    <property type="evidence" value="ECO:0007669"/>
    <property type="project" value="UniProtKB-UniRule"/>
</dbReference>
<dbReference type="GO" id="GO:0006355">
    <property type="term" value="P:regulation of DNA-templated transcription"/>
    <property type="evidence" value="ECO:0007669"/>
    <property type="project" value="InterPro"/>
</dbReference>
<dbReference type="GO" id="GO:0043487">
    <property type="term" value="P:regulation of RNA stability"/>
    <property type="evidence" value="ECO:0007669"/>
    <property type="project" value="TreeGrafter"/>
</dbReference>
<dbReference type="GO" id="GO:0045974">
    <property type="term" value="P:regulation of translation, ncRNA-mediated"/>
    <property type="evidence" value="ECO:0007669"/>
    <property type="project" value="TreeGrafter"/>
</dbReference>
<dbReference type="CDD" id="cd01716">
    <property type="entry name" value="Hfq"/>
    <property type="match status" value="1"/>
</dbReference>
<dbReference type="Gene3D" id="2.30.30.100">
    <property type="match status" value="1"/>
</dbReference>
<dbReference type="HAMAP" id="MF_00436">
    <property type="entry name" value="Hfq"/>
    <property type="match status" value="1"/>
</dbReference>
<dbReference type="InterPro" id="IPR005001">
    <property type="entry name" value="Hfq"/>
</dbReference>
<dbReference type="InterPro" id="IPR010920">
    <property type="entry name" value="LSM_dom_sf"/>
</dbReference>
<dbReference type="InterPro" id="IPR047575">
    <property type="entry name" value="Sm"/>
</dbReference>
<dbReference type="NCBIfam" id="TIGR02383">
    <property type="entry name" value="Hfq"/>
    <property type="match status" value="1"/>
</dbReference>
<dbReference type="NCBIfam" id="NF001602">
    <property type="entry name" value="PRK00395.1"/>
    <property type="match status" value="1"/>
</dbReference>
<dbReference type="PANTHER" id="PTHR34772">
    <property type="entry name" value="RNA-BINDING PROTEIN HFQ"/>
    <property type="match status" value="1"/>
</dbReference>
<dbReference type="PANTHER" id="PTHR34772:SF1">
    <property type="entry name" value="RNA-BINDING PROTEIN HFQ"/>
    <property type="match status" value="1"/>
</dbReference>
<dbReference type="Pfam" id="PF17209">
    <property type="entry name" value="Hfq"/>
    <property type="match status" value="1"/>
</dbReference>
<dbReference type="SUPFAM" id="SSF50182">
    <property type="entry name" value="Sm-like ribonucleoproteins"/>
    <property type="match status" value="1"/>
</dbReference>
<dbReference type="PROSITE" id="PS52002">
    <property type="entry name" value="SM"/>
    <property type="match status" value="1"/>
</dbReference>
<feature type="chain" id="PRO_1000025891" description="RNA-binding protein Hfq">
    <location>
        <begin position="1"/>
        <end position="78"/>
    </location>
</feature>
<feature type="domain" description="Sm" evidence="2">
    <location>
        <begin position="10"/>
        <end position="70"/>
    </location>
</feature>
<protein>
    <recommendedName>
        <fullName evidence="1">RNA-binding protein Hfq</fullName>
    </recommendedName>
</protein>
<comment type="function">
    <text evidence="1">RNA chaperone that binds small regulatory RNA (sRNAs) and mRNAs to facilitate mRNA translational regulation in response to envelope stress, environmental stress and changes in metabolite concentrations. Also binds with high specificity to tRNAs.</text>
</comment>
<comment type="subunit">
    <text evidence="1">Homohexamer.</text>
</comment>
<comment type="similarity">
    <text evidence="1">Belongs to the Hfq family.</text>
</comment>
<keyword id="KW-0694">RNA-binding</keyword>
<keyword id="KW-0346">Stress response</keyword>
<proteinExistence type="inferred from homology"/>
<evidence type="ECO:0000255" key="1">
    <source>
        <dbReference type="HAMAP-Rule" id="MF_00436"/>
    </source>
</evidence>
<evidence type="ECO:0000255" key="2">
    <source>
        <dbReference type="PROSITE-ProRule" id="PRU01346"/>
    </source>
</evidence>
<sequence>MAERSQNLQDLFLNSVRKQKISLTIFLINGVKLTGIVTSFDNFCVLLRRDGHSQLVYKHAISTIMPSQPVQMFEGEEA</sequence>
<organism>
    <name type="scientific">Brucella ovis (strain ATCC 25840 / 63/290 / NCTC 10512)</name>
    <dbReference type="NCBI Taxonomy" id="444178"/>
    <lineage>
        <taxon>Bacteria</taxon>
        <taxon>Pseudomonadati</taxon>
        <taxon>Pseudomonadota</taxon>
        <taxon>Alphaproteobacteria</taxon>
        <taxon>Hyphomicrobiales</taxon>
        <taxon>Brucellaceae</taxon>
        <taxon>Brucella/Ochrobactrum group</taxon>
        <taxon>Brucella</taxon>
    </lineage>
</organism>
<reference key="1">
    <citation type="journal article" date="2009" name="PLoS ONE">
        <title>Genome degradation in Brucella ovis corresponds with narrowing of its host range and tissue tropism.</title>
        <authorList>
            <person name="Tsolis R.M."/>
            <person name="Seshadri R."/>
            <person name="Santos R.L."/>
            <person name="Sangari F.J."/>
            <person name="Lobo J.M."/>
            <person name="de Jong M.F."/>
            <person name="Ren Q."/>
            <person name="Myers G."/>
            <person name="Brinkac L.M."/>
            <person name="Nelson W.C."/>
            <person name="Deboy R.T."/>
            <person name="Angiuoli S."/>
            <person name="Khouri H."/>
            <person name="Dimitrov G."/>
            <person name="Robinson J.R."/>
            <person name="Mulligan S."/>
            <person name="Walker R.L."/>
            <person name="Elzer P.E."/>
            <person name="Hassan K.A."/>
            <person name="Paulsen I.T."/>
        </authorList>
    </citation>
    <scope>NUCLEOTIDE SEQUENCE [LARGE SCALE GENOMIC DNA]</scope>
    <source>
        <strain>ATCC 25840 / 63/290 / NCTC 10512</strain>
    </source>
</reference>
<gene>
    <name evidence="1" type="primary">hfq</name>
    <name type="ordered locus">BOV_1070</name>
</gene>